<feature type="chain" id="PRO_0000285587" description="Pre-rRNA-processing protein TSR2 homolog">
    <location>
        <begin position="1"/>
        <end position="190"/>
    </location>
</feature>
<feature type="region of interest" description="Disordered" evidence="1">
    <location>
        <begin position="149"/>
        <end position="172"/>
    </location>
</feature>
<feature type="sequence variant" id="VAR_073396" description="In DBA14; dbSNP:rs786203996." evidence="2">
    <original>E</original>
    <variation>G</variation>
    <location>
        <position position="64"/>
    </location>
</feature>
<evidence type="ECO:0000256" key="1">
    <source>
        <dbReference type="SAM" id="MobiDB-lite"/>
    </source>
</evidence>
<evidence type="ECO:0000269" key="2">
    <source>
    </source>
</evidence>
<evidence type="ECO:0000305" key="3"/>
<gene>
    <name type="primary">TSR2</name>
</gene>
<keyword id="KW-1024">Diamond-Blackfan anemia</keyword>
<keyword id="KW-0225">Disease variant</keyword>
<keyword id="KW-1267">Proteomics identification</keyword>
<keyword id="KW-1185">Reference proteome</keyword>
<keyword id="KW-0698">rRNA processing</keyword>
<organism>
    <name type="scientific">Homo sapiens</name>
    <name type="common">Human</name>
    <dbReference type="NCBI Taxonomy" id="9606"/>
    <lineage>
        <taxon>Eukaryota</taxon>
        <taxon>Metazoa</taxon>
        <taxon>Chordata</taxon>
        <taxon>Craniata</taxon>
        <taxon>Vertebrata</taxon>
        <taxon>Euteleostomi</taxon>
        <taxon>Mammalia</taxon>
        <taxon>Eutheria</taxon>
        <taxon>Euarchontoglires</taxon>
        <taxon>Primates</taxon>
        <taxon>Haplorrhini</taxon>
        <taxon>Catarrhini</taxon>
        <taxon>Hominidae</taxon>
        <taxon>Homo</taxon>
    </lineage>
</organism>
<comment type="function">
    <text evidence="3">May be involved in 20S pre-rRNA processing.</text>
</comment>
<comment type="interaction">
    <interactant intactId="EBI-746981">
        <id>Q969E8</id>
    </interactant>
    <interactant intactId="EBI-1383687">
        <id>Q9UQM7</id>
        <label>CAMK2A</label>
    </interactant>
    <organismsDiffer>false</organismsDiffer>
    <experiments>3</experiments>
</comment>
<comment type="interaction">
    <interactant intactId="EBI-746981">
        <id>Q969E8</id>
    </interactant>
    <interactant intactId="EBI-12149877">
        <id>Q8IY22-3</id>
        <label>CMIP</label>
    </interactant>
    <organismsDiffer>false</organismsDiffer>
    <experiments>3</experiments>
</comment>
<comment type="interaction">
    <interactant intactId="EBI-746981">
        <id>Q969E8</id>
    </interactant>
    <interactant intactId="EBI-10192698">
        <id>Q02930-3</id>
        <label>CREB5</label>
    </interactant>
    <organismsDiffer>false</organismsDiffer>
    <experiments>3</experiments>
</comment>
<comment type="interaction">
    <interactant intactId="EBI-746981">
        <id>Q969E8</id>
    </interactant>
    <interactant intactId="EBI-12840152">
        <id>A0PJW8</id>
        <label>DAPL1</label>
    </interactant>
    <organismsDiffer>false</organismsDiffer>
    <experiments>3</experiments>
</comment>
<comment type="interaction">
    <interactant intactId="EBI-746981">
        <id>Q969E8</id>
    </interactant>
    <interactant intactId="EBI-11988027">
        <id>Q9NRI5-2</id>
        <label>DISC1</label>
    </interactant>
    <organismsDiffer>false</organismsDiffer>
    <experiments>3</experiments>
</comment>
<comment type="interaction">
    <interactant intactId="EBI-746981">
        <id>Q969E8</id>
    </interactant>
    <interactant intactId="EBI-371866">
        <id>Q9NQT5</id>
        <label>EXOSC3</label>
    </interactant>
    <organismsDiffer>false</organismsDiffer>
    <experiments>3</experiments>
</comment>
<comment type="interaction">
    <interactant intactId="EBI-746981">
        <id>Q969E8</id>
    </interactant>
    <interactant intactId="EBI-712001">
        <id>O95166</id>
        <label>GABARAP</label>
    </interactant>
    <organismsDiffer>false</organismsDiffer>
    <experiments>5</experiments>
</comment>
<comment type="interaction">
    <interactant intactId="EBI-746981">
        <id>Q969E8</id>
    </interactant>
    <interactant intactId="EBI-720116">
        <id>P60520</id>
        <label>GABARAPL2</label>
    </interactant>
    <organismsDiffer>false</organismsDiffer>
    <experiments>11</experiments>
</comment>
<comment type="interaction">
    <interactant intactId="EBI-746981">
        <id>Q969E8</id>
    </interactant>
    <interactant intactId="EBI-9248152">
        <id>Q86XJ1</id>
        <label>GAS2L3</label>
    </interactant>
    <organismsDiffer>false</organismsDiffer>
    <experiments>3</experiments>
</comment>
<comment type="interaction">
    <interactant intactId="EBI-746981">
        <id>Q969E8</id>
    </interactant>
    <interactant intactId="EBI-19954058">
        <id>O15499</id>
        <label>GSC2</label>
    </interactant>
    <organismsDiffer>false</organismsDiffer>
    <experiments>3</experiments>
</comment>
<comment type="interaction">
    <interactant intactId="EBI-746981">
        <id>Q969E8</id>
    </interactant>
    <interactant intactId="EBI-10988217">
        <id>Q96L93-6</id>
        <label>KIF16B</label>
    </interactant>
    <organismsDiffer>false</organismsDiffer>
    <experiments>3</experiments>
</comment>
<comment type="interaction">
    <interactant intactId="EBI-746981">
        <id>Q969E8</id>
    </interactant>
    <interactant intactId="EBI-2125614">
        <id>Q9BVG8</id>
        <label>KIFC3</label>
    </interactant>
    <organismsDiffer>false</organismsDiffer>
    <experiments>3</experiments>
</comment>
<comment type="interaction">
    <interactant intactId="EBI-746981">
        <id>Q969E8</id>
    </interactant>
    <interactant intactId="EBI-14069005">
        <id>Q9BVG8-5</id>
        <label>KIFC3</label>
    </interactant>
    <organismsDiffer>false</organismsDiffer>
    <experiments>3</experiments>
</comment>
<comment type="interaction">
    <interactant intactId="EBI-746981">
        <id>Q969E8</id>
    </interactant>
    <interactant intactId="EBI-2529769">
        <id>P55268</id>
        <label>LAMB2</label>
    </interactant>
    <organismsDiffer>false</organismsDiffer>
    <experiments>3</experiments>
</comment>
<comment type="interaction">
    <interactant intactId="EBI-746981">
        <id>Q969E8</id>
    </interactant>
    <interactant intactId="EBI-2603996">
        <id>Q9BXW4</id>
        <label>MAP1LC3C</label>
    </interactant>
    <organismsDiffer>false</organismsDiffer>
    <experiments>3</experiments>
</comment>
<comment type="interaction">
    <interactant intactId="EBI-746981">
        <id>Q969E8</id>
    </interactant>
    <interactant intactId="EBI-16439278">
        <id>Q6FHY5</id>
        <label>MEOX2</label>
    </interactant>
    <organismsDiffer>false</organismsDiffer>
    <experiments>3</experiments>
</comment>
<comment type="interaction">
    <interactant intactId="EBI-746981">
        <id>Q969E8</id>
    </interactant>
    <interactant intactId="EBI-348555">
        <id>O75928</id>
        <label>PIAS2</label>
    </interactant>
    <organismsDiffer>false</organismsDiffer>
    <experiments>3</experiments>
</comment>
<comment type="interaction">
    <interactant intactId="EBI-746981">
        <id>Q969E8</id>
    </interactant>
    <interactant intactId="EBI-348567">
        <id>O75928-2</id>
        <label>PIAS2</label>
    </interactant>
    <organismsDiffer>false</organismsDiffer>
    <experiments>3</experiments>
</comment>
<comment type="interaction">
    <interactant intactId="EBI-746981">
        <id>Q969E8</id>
    </interactant>
    <interactant intactId="EBI-1053424">
        <id>O43741</id>
        <label>PRKAB2</label>
    </interactant>
    <organismsDiffer>false</organismsDiffer>
    <experiments>3</experiments>
</comment>
<comment type="interaction">
    <interactant intactId="EBI-746981">
        <id>Q969E8</id>
    </interactant>
    <interactant intactId="EBI-12807218">
        <id>Q6GMV3</id>
        <label>PTRHD1</label>
    </interactant>
    <organismsDiffer>false</organismsDiffer>
    <experiments>3</experiments>
</comment>
<comment type="interaction">
    <interactant intactId="EBI-746981">
        <id>Q969E8</id>
    </interactant>
    <interactant intactId="EBI-473821">
        <id>Q5RL73</id>
        <label>RBM48</label>
    </interactant>
    <organismsDiffer>false</organismsDiffer>
    <experiments>3</experiments>
</comment>
<comment type="interaction">
    <interactant intactId="EBI-746981">
        <id>Q969E8</id>
    </interactant>
    <interactant intactId="EBI-353438">
        <id>P62854</id>
        <label>RPS26</label>
    </interactant>
    <organismsDiffer>false</organismsDiffer>
    <experiments>17</experiments>
</comment>
<comment type="interaction">
    <interactant intactId="EBI-746981">
        <id>Q969E8</id>
    </interactant>
    <interactant intactId="EBI-11995806">
        <id>Q9H0A9-2</id>
        <label>SPATC1L</label>
    </interactant>
    <organismsDiffer>false</organismsDiffer>
    <experiments>3</experiments>
</comment>
<comment type="interaction">
    <interactant intactId="EBI-746981">
        <id>Q969E8</id>
    </interactant>
    <interactant intactId="EBI-395708">
        <id>Q96C00</id>
        <label>ZBTB9</label>
    </interactant>
    <organismsDiffer>false</organismsDiffer>
    <experiments>6</experiments>
</comment>
<comment type="interaction">
    <interactant intactId="EBI-746981">
        <id>Q969E8</id>
    </interactant>
    <interactant intactId="EBI-17269964">
        <id>Q6S9Z5</id>
        <label>ZNF474</label>
    </interactant>
    <organismsDiffer>false</organismsDiffer>
    <experiments>3</experiments>
</comment>
<comment type="interaction">
    <interactant intactId="EBI-746981">
        <id>Q969E8</id>
    </interactant>
    <interactant intactId="EBI-4395669">
        <id>Q6ZNG0</id>
        <label>ZNF620</label>
    </interactant>
    <organismsDiffer>false</organismsDiffer>
    <experiments>3</experiments>
</comment>
<comment type="disease" evidence="2">
    <disease id="DI-04366">
        <name>Diamond-Blackfan anemia 14, with mandibulofacial dysostosis</name>
        <acronym>DBA14</acronym>
        <description>A form of Diamond-Blackfan anemia, a congenital non-regenerative hypoplastic anemia that usually presents early in infancy. Diamond-Blackfan anemia is characterized by a moderate to severe macrocytic anemia, erythroblastopenia, and an increased risk of malignancy. 30 to 40% of Diamond-Blackfan anemia patients present with short stature and congenital anomalies, the most frequent being craniofacial (Pierre-Robin syndrome and cleft palate), thumb and urogenital anomalies.</description>
        <dbReference type="MIM" id="300946"/>
    </disease>
    <text>The disease is caused by variants affecting the gene represented in this entry.</text>
</comment>
<comment type="similarity">
    <text evidence="3">Belongs to the TSR2 family.</text>
</comment>
<sequence length="191" mass="20894">MAGAAEDARALFRAGVCAALEAWPALQIAVENGFGGVHSQEKAKWLGGAVEDYFMRNADLELDEVEDFLGELLTNEFDTVVEDGSLPQVSQQLQTMFHHFQRGDGAALREMASCITQRKCKVTATALKTARETDEDEDDVDSVEEMEVTATNDGAATDGVCPQPEPSDPDAQTIKEEDIVEDGWTIVRRKK</sequence>
<protein>
    <recommendedName>
        <fullName>Pre-rRNA-processing protein TSR2 homolog</fullName>
    </recommendedName>
</protein>
<proteinExistence type="evidence at protein level"/>
<dbReference type="EMBL" id="Z85987">
    <property type="status" value="NOT_ANNOTATED_CDS"/>
    <property type="molecule type" value="Genomic_DNA"/>
</dbReference>
<dbReference type="EMBL" id="BC007699">
    <property type="protein sequence ID" value="AAH07699.1"/>
    <property type="molecule type" value="mRNA"/>
</dbReference>
<dbReference type="EMBL" id="BC011825">
    <property type="protein sequence ID" value="AAH11825.1"/>
    <property type="molecule type" value="mRNA"/>
</dbReference>
<dbReference type="CCDS" id="CCDS14358.1"/>
<dbReference type="RefSeq" id="NP_477511.1">
    <property type="nucleotide sequence ID" value="NM_058163.3"/>
</dbReference>
<dbReference type="SMR" id="Q969E8"/>
<dbReference type="BioGRID" id="124665">
    <property type="interactions" value="40"/>
</dbReference>
<dbReference type="FunCoup" id="Q969E8">
    <property type="interactions" value="1755"/>
</dbReference>
<dbReference type="IntAct" id="Q969E8">
    <property type="interactions" value="31"/>
</dbReference>
<dbReference type="MINT" id="Q969E8"/>
<dbReference type="STRING" id="9606.ENSP00000364293"/>
<dbReference type="GlyGen" id="Q969E8">
    <property type="glycosylation" value="1 site, 1 O-linked glycan (1 site)"/>
</dbReference>
<dbReference type="iPTMnet" id="Q969E8"/>
<dbReference type="PhosphoSitePlus" id="Q969E8"/>
<dbReference type="SwissPalm" id="Q969E8"/>
<dbReference type="BioMuta" id="TSR2"/>
<dbReference type="DMDM" id="74760678"/>
<dbReference type="jPOST" id="Q969E8"/>
<dbReference type="MassIVE" id="Q969E8"/>
<dbReference type="PaxDb" id="9606-ENSP00000364293"/>
<dbReference type="PeptideAtlas" id="Q969E8"/>
<dbReference type="ProteomicsDB" id="75745"/>
<dbReference type="Pumba" id="Q969E8"/>
<dbReference type="TopDownProteomics" id="Q969E8"/>
<dbReference type="Antibodypedia" id="26781">
    <property type="antibodies" value="71 antibodies from 18 providers"/>
</dbReference>
<dbReference type="DNASU" id="90121"/>
<dbReference type="Ensembl" id="ENST00000375151.5">
    <property type="protein sequence ID" value="ENSP00000364293.4"/>
    <property type="gene ID" value="ENSG00000158526.8"/>
</dbReference>
<dbReference type="GeneID" id="90121"/>
<dbReference type="KEGG" id="hsa:90121"/>
<dbReference type="MANE-Select" id="ENST00000375151.5">
    <property type="protein sequence ID" value="ENSP00000364293.4"/>
    <property type="RefSeq nucleotide sequence ID" value="NM_058163.3"/>
    <property type="RefSeq protein sequence ID" value="NP_477511.1"/>
</dbReference>
<dbReference type="UCSC" id="uc004dte.5">
    <property type="organism name" value="human"/>
</dbReference>
<dbReference type="AGR" id="HGNC:25455"/>
<dbReference type="CTD" id="90121"/>
<dbReference type="DisGeNET" id="90121"/>
<dbReference type="GeneCards" id="TSR2"/>
<dbReference type="GeneReviews" id="TSR2"/>
<dbReference type="HGNC" id="HGNC:25455">
    <property type="gene designation" value="TSR2"/>
</dbReference>
<dbReference type="HPA" id="ENSG00000158526">
    <property type="expression patterns" value="Tissue enhanced (brain)"/>
</dbReference>
<dbReference type="MalaCards" id="TSR2"/>
<dbReference type="MIM" id="300945">
    <property type="type" value="gene"/>
</dbReference>
<dbReference type="MIM" id="300946">
    <property type="type" value="phenotype"/>
</dbReference>
<dbReference type="neXtProt" id="NX_Q969E8"/>
<dbReference type="OpenTargets" id="ENSG00000158526"/>
<dbReference type="Orphanet" id="124">
    <property type="disease" value="Diamond-Blackfan anemia"/>
</dbReference>
<dbReference type="PharmGKB" id="PA145147877"/>
<dbReference type="VEuPathDB" id="HostDB:ENSG00000158526"/>
<dbReference type="eggNOG" id="KOG4032">
    <property type="taxonomic scope" value="Eukaryota"/>
</dbReference>
<dbReference type="GeneTree" id="ENSGT00390000012692"/>
<dbReference type="HOGENOM" id="CLU_074896_2_0_1"/>
<dbReference type="InParanoid" id="Q969E8"/>
<dbReference type="OMA" id="QSNWGGP"/>
<dbReference type="OrthoDB" id="263560at2759"/>
<dbReference type="PAN-GO" id="Q969E8">
    <property type="GO annotations" value="2 GO annotations based on evolutionary models"/>
</dbReference>
<dbReference type="PhylomeDB" id="Q969E8"/>
<dbReference type="TreeFam" id="TF314018"/>
<dbReference type="PathwayCommons" id="Q969E8"/>
<dbReference type="SignaLink" id="Q969E8"/>
<dbReference type="BioGRID-ORCS" id="90121">
    <property type="hits" value="461 hits in 764 CRISPR screens"/>
</dbReference>
<dbReference type="ChiTaRS" id="TSR2">
    <property type="organism name" value="human"/>
</dbReference>
<dbReference type="GenomeRNAi" id="90121"/>
<dbReference type="Pharos" id="Q969E8">
    <property type="development level" value="Tbio"/>
</dbReference>
<dbReference type="PRO" id="PR:Q969E8"/>
<dbReference type="Proteomes" id="UP000005640">
    <property type="component" value="Chromosome X"/>
</dbReference>
<dbReference type="RNAct" id="Q969E8">
    <property type="molecule type" value="protein"/>
</dbReference>
<dbReference type="Bgee" id="ENSG00000158526">
    <property type="expression patterns" value="Expressed in tendon of biceps brachii and 222 other cell types or tissues"/>
</dbReference>
<dbReference type="ExpressionAtlas" id="Q969E8">
    <property type="expression patterns" value="baseline and differential"/>
</dbReference>
<dbReference type="GO" id="GO:0005634">
    <property type="term" value="C:nucleus"/>
    <property type="evidence" value="ECO:0000318"/>
    <property type="project" value="GO_Central"/>
</dbReference>
<dbReference type="GO" id="GO:0000462">
    <property type="term" value="P:maturation of SSU-rRNA from tricistronic rRNA transcript (SSU-rRNA, 5.8S rRNA, LSU-rRNA)"/>
    <property type="evidence" value="ECO:0000318"/>
    <property type="project" value="GO_Central"/>
</dbReference>
<dbReference type="InterPro" id="IPR019398">
    <property type="entry name" value="Pre-rRNA_process_TSR2"/>
</dbReference>
<dbReference type="PANTHER" id="PTHR21250">
    <property type="entry name" value="PRE-RRNA-PROCESSING PROTEIN TSR2 HOMOLOG"/>
    <property type="match status" value="1"/>
</dbReference>
<dbReference type="Pfam" id="PF10273">
    <property type="entry name" value="WGG"/>
    <property type="match status" value="1"/>
</dbReference>
<name>TSR2_HUMAN</name>
<accession>Q969E8</accession>
<reference key="1">
    <citation type="journal article" date="2005" name="Nature">
        <title>The DNA sequence of the human X chromosome.</title>
        <authorList>
            <person name="Ross M.T."/>
            <person name="Grafham D.V."/>
            <person name="Coffey A.J."/>
            <person name="Scherer S."/>
            <person name="McLay K."/>
            <person name="Muzny D."/>
            <person name="Platzer M."/>
            <person name="Howell G.R."/>
            <person name="Burrows C."/>
            <person name="Bird C.P."/>
            <person name="Frankish A."/>
            <person name="Lovell F.L."/>
            <person name="Howe K.L."/>
            <person name="Ashurst J.L."/>
            <person name="Fulton R.S."/>
            <person name="Sudbrak R."/>
            <person name="Wen G."/>
            <person name="Jones M.C."/>
            <person name="Hurles M.E."/>
            <person name="Andrews T.D."/>
            <person name="Scott C.E."/>
            <person name="Searle S."/>
            <person name="Ramser J."/>
            <person name="Whittaker A."/>
            <person name="Deadman R."/>
            <person name="Carter N.P."/>
            <person name="Hunt S.E."/>
            <person name="Chen R."/>
            <person name="Cree A."/>
            <person name="Gunaratne P."/>
            <person name="Havlak P."/>
            <person name="Hodgson A."/>
            <person name="Metzker M.L."/>
            <person name="Richards S."/>
            <person name="Scott G."/>
            <person name="Steffen D."/>
            <person name="Sodergren E."/>
            <person name="Wheeler D.A."/>
            <person name="Worley K.C."/>
            <person name="Ainscough R."/>
            <person name="Ambrose K.D."/>
            <person name="Ansari-Lari M.A."/>
            <person name="Aradhya S."/>
            <person name="Ashwell R.I."/>
            <person name="Babbage A.K."/>
            <person name="Bagguley C.L."/>
            <person name="Ballabio A."/>
            <person name="Banerjee R."/>
            <person name="Barker G.E."/>
            <person name="Barlow K.F."/>
            <person name="Barrett I.P."/>
            <person name="Bates K.N."/>
            <person name="Beare D.M."/>
            <person name="Beasley H."/>
            <person name="Beasley O."/>
            <person name="Beck A."/>
            <person name="Bethel G."/>
            <person name="Blechschmidt K."/>
            <person name="Brady N."/>
            <person name="Bray-Allen S."/>
            <person name="Bridgeman A.M."/>
            <person name="Brown A.J."/>
            <person name="Brown M.J."/>
            <person name="Bonnin D."/>
            <person name="Bruford E.A."/>
            <person name="Buhay C."/>
            <person name="Burch P."/>
            <person name="Burford D."/>
            <person name="Burgess J."/>
            <person name="Burrill W."/>
            <person name="Burton J."/>
            <person name="Bye J.M."/>
            <person name="Carder C."/>
            <person name="Carrel L."/>
            <person name="Chako J."/>
            <person name="Chapman J.C."/>
            <person name="Chavez D."/>
            <person name="Chen E."/>
            <person name="Chen G."/>
            <person name="Chen Y."/>
            <person name="Chen Z."/>
            <person name="Chinault C."/>
            <person name="Ciccodicola A."/>
            <person name="Clark S.Y."/>
            <person name="Clarke G."/>
            <person name="Clee C.M."/>
            <person name="Clegg S."/>
            <person name="Clerc-Blankenburg K."/>
            <person name="Clifford K."/>
            <person name="Cobley V."/>
            <person name="Cole C.G."/>
            <person name="Conquer J.S."/>
            <person name="Corby N."/>
            <person name="Connor R.E."/>
            <person name="David R."/>
            <person name="Davies J."/>
            <person name="Davis C."/>
            <person name="Davis J."/>
            <person name="Delgado O."/>
            <person name="Deshazo D."/>
            <person name="Dhami P."/>
            <person name="Ding Y."/>
            <person name="Dinh H."/>
            <person name="Dodsworth S."/>
            <person name="Draper H."/>
            <person name="Dugan-Rocha S."/>
            <person name="Dunham A."/>
            <person name="Dunn M."/>
            <person name="Durbin K.J."/>
            <person name="Dutta I."/>
            <person name="Eades T."/>
            <person name="Ellwood M."/>
            <person name="Emery-Cohen A."/>
            <person name="Errington H."/>
            <person name="Evans K.L."/>
            <person name="Faulkner L."/>
            <person name="Francis F."/>
            <person name="Frankland J."/>
            <person name="Fraser A.E."/>
            <person name="Galgoczy P."/>
            <person name="Gilbert J."/>
            <person name="Gill R."/>
            <person name="Gloeckner G."/>
            <person name="Gregory S.G."/>
            <person name="Gribble S."/>
            <person name="Griffiths C."/>
            <person name="Grocock R."/>
            <person name="Gu Y."/>
            <person name="Gwilliam R."/>
            <person name="Hamilton C."/>
            <person name="Hart E.A."/>
            <person name="Hawes A."/>
            <person name="Heath P.D."/>
            <person name="Heitmann K."/>
            <person name="Hennig S."/>
            <person name="Hernandez J."/>
            <person name="Hinzmann B."/>
            <person name="Ho S."/>
            <person name="Hoffs M."/>
            <person name="Howden P.J."/>
            <person name="Huckle E.J."/>
            <person name="Hume J."/>
            <person name="Hunt P.J."/>
            <person name="Hunt A.R."/>
            <person name="Isherwood J."/>
            <person name="Jacob L."/>
            <person name="Johnson D."/>
            <person name="Jones S."/>
            <person name="de Jong P.J."/>
            <person name="Joseph S.S."/>
            <person name="Keenan S."/>
            <person name="Kelly S."/>
            <person name="Kershaw J.K."/>
            <person name="Khan Z."/>
            <person name="Kioschis P."/>
            <person name="Klages S."/>
            <person name="Knights A.J."/>
            <person name="Kosiura A."/>
            <person name="Kovar-Smith C."/>
            <person name="Laird G.K."/>
            <person name="Langford C."/>
            <person name="Lawlor S."/>
            <person name="Leversha M."/>
            <person name="Lewis L."/>
            <person name="Liu W."/>
            <person name="Lloyd C."/>
            <person name="Lloyd D.M."/>
            <person name="Loulseged H."/>
            <person name="Loveland J.E."/>
            <person name="Lovell J.D."/>
            <person name="Lozado R."/>
            <person name="Lu J."/>
            <person name="Lyne R."/>
            <person name="Ma J."/>
            <person name="Maheshwari M."/>
            <person name="Matthews L.H."/>
            <person name="McDowall J."/>
            <person name="McLaren S."/>
            <person name="McMurray A."/>
            <person name="Meidl P."/>
            <person name="Meitinger T."/>
            <person name="Milne S."/>
            <person name="Miner G."/>
            <person name="Mistry S.L."/>
            <person name="Morgan M."/>
            <person name="Morris S."/>
            <person name="Mueller I."/>
            <person name="Mullikin J.C."/>
            <person name="Nguyen N."/>
            <person name="Nordsiek G."/>
            <person name="Nyakatura G."/>
            <person name="O'dell C.N."/>
            <person name="Okwuonu G."/>
            <person name="Palmer S."/>
            <person name="Pandian R."/>
            <person name="Parker D."/>
            <person name="Parrish J."/>
            <person name="Pasternak S."/>
            <person name="Patel D."/>
            <person name="Pearce A.V."/>
            <person name="Pearson D.M."/>
            <person name="Pelan S.E."/>
            <person name="Perez L."/>
            <person name="Porter K.M."/>
            <person name="Ramsey Y."/>
            <person name="Reichwald K."/>
            <person name="Rhodes S."/>
            <person name="Ridler K.A."/>
            <person name="Schlessinger D."/>
            <person name="Schueler M.G."/>
            <person name="Sehra H.K."/>
            <person name="Shaw-Smith C."/>
            <person name="Shen H."/>
            <person name="Sheridan E.M."/>
            <person name="Shownkeen R."/>
            <person name="Skuce C.D."/>
            <person name="Smith M.L."/>
            <person name="Sotheran E.C."/>
            <person name="Steingruber H.E."/>
            <person name="Steward C.A."/>
            <person name="Storey R."/>
            <person name="Swann R.M."/>
            <person name="Swarbreck D."/>
            <person name="Tabor P.E."/>
            <person name="Taudien S."/>
            <person name="Taylor T."/>
            <person name="Teague B."/>
            <person name="Thomas K."/>
            <person name="Thorpe A."/>
            <person name="Timms K."/>
            <person name="Tracey A."/>
            <person name="Trevanion S."/>
            <person name="Tromans A.C."/>
            <person name="d'Urso M."/>
            <person name="Verduzco D."/>
            <person name="Villasana D."/>
            <person name="Waldron L."/>
            <person name="Wall M."/>
            <person name="Wang Q."/>
            <person name="Warren J."/>
            <person name="Warry G.L."/>
            <person name="Wei X."/>
            <person name="West A."/>
            <person name="Whitehead S.L."/>
            <person name="Whiteley M.N."/>
            <person name="Wilkinson J.E."/>
            <person name="Willey D.L."/>
            <person name="Williams G."/>
            <person name="Williams L."/>
            <person name="Williamson A."/>
            <person name="Williamson H."/>
            <person name="Wilming L."/>
            <person name="Woodmansey R.L."/>
            <person name="Wray P.W."/>
            <person name="Yen J."/>
            <person name="Zhang J."/>
            <person name="Zhou J."/>
            <person name="Zoghbi H."/>
            <person name="Zorilla S."/>
            <person name="Buck D."/>
            <person name="Reinhardt R."/>
            <person name="Poustka A."/>
            <person name="Rosenthal A."/>
            <person name="Lehrach H."/>
            <person name="Meindl A."/>
            <person name="Minx P.J."/>
            <person name="Hillier L.W."/>
            <person name="Willard H.F."/>
            <person name="Wilson R.K."/>
            <person name="Waterston R.H."/>
            <person name="Rice C.M."/>
            <person name="Vaudin M."/>
            <person name="Coulson A."/>
            <person name="Nelson D.L."/>
            <person name="Weinstock G."/>
            <person name="Sulston J.E."/>
            <person name="Durbin R.M."/>
            <person name="Hubbard T."/>
            <person name="Gibbs R.A."/>
            <person name="Beck S."/>
            <person name="Rogers J."/>
            <person name="Bentley D.R."/>
        </authorList>
    </citation>
    <scope>NUCLEOTIDE SEQUENCE [LARGE SCALE GENOMIC DNA]</scope>
</reference>
<reference key="2">
    <citation type="journal article" date="2004" name="Genome Res.">
        <title>The status, quality, and expansion of the NIH full-length cDNA project: the Mammalian Gene Collection (MGC).</title>
        <authorList>
            <consortium name="The MGC Project Team"/>
        </authorList>
    </citation>
    <scope>NUCLEOTIDE SEQUENCE [LARGE SCALE MRNA]</scope>
    <source>
        <tissue>Skin</tissue>
    </source>
</reference>
<reference key="3">
    <citation type="journal article" date="2011" name="BMC Syst. Biol.">
        <title>Initial characterization of the human central proteome.</title>
        <authorList>
            <person name="Burkard T.R."/>
            <person name="Planyavsky M."/>
            <person name="Kaupe I."/>
            <person name="Breitwieser F.P."/>
            <person name="Buerckstuemmer T."/>
            <person name="Bennett K.L."/>
            <person name="Superti-Furga G."/>
            <person name="Colinge J."/>
        </authorList>
    </citation>
    <scope>IDENTIFICATION BY MASS SPECTROMETRY [LARGE SCALE ANALYSIS]</scope>
</reference>
<reference key="4">
    <citation type="journal article" date="2011" name="Sci. Signal.">
        <title>System-wide temporal characterization of the proteome and phosphoproteome of human embryonic stem cell differentiation.</title>
        <authorList>
            <person name="Rigbolt K.T."/>
            <person name="Prokhorova T.A."/>
            <person name="Akimov V."/>
            <person name="Henningsen J."/>
            <person name="Johansen P.T."/>
            <person name="Kratchmarova I."/>
            <person name="Kassem M."/>
            <person name="Mann M."/>
            <person name="Olsen J.V."/>
            <person name="Blagoev B."/>
        </authorList>
    </citation>
    <scope>IDENTIFICATION BY MASS SPECTROMETRY [LARGE SCALE ANALYSIS]</scope>
</reference>
<reference key="5">
    <citation type="journal article" date="2014" name="Am. J. Med. Genet. A">
        <title>Diamond-Blackfan anemia with mandibulofacial dystostosis is heterogeneous, including the novel DBA genes TSR2 and RPS28.</title>
        <authorList>
            <consortium name="UW Center for Mendelian Genomics"/>
            <person name="Gripp K.W."/>
            <person name="Curry C."/>
            <person name="Olney A.H."/>
            <person name="Sandoval C."/>
            <person name="Fisher J."/>
            <person name="Chong J.X."/>
            <person name="Pilchman L."/>
            <person name="Sahraoui R."/>
            <person name="Stabley D.L."/>
            <person name="Sol-Church K."/>
        </authorList>
    </citation>
    <scope>VARIANT DBA14 GLY-64</scope>
</reference>